<comment type="function">
    <text evidence="2 5">Proton-coupled antiporter flippase that catalyzes the translocation, from the inner to the outer leaflet of the cell membrane, of the lipid-linked disaccharide (anchor-LLD) that anchors lipoteichoic acids (LTA) to the cell membrane (PubMed:17209021, PubMed:32367070). Displays high selectivity towards the headgroup of its substrate (PubMed:32367070). Plays an important role during infection (PubMed:17209021). Contributes to S.aureus survival under physiological acidic conditions (PubMed:32367070).</text>
</comment>
<comment type="activity regulation">
    <text evidence="5">Flipping activity is inhibited by increasing concentrations of gentiobiose, a disaccharide with the same chemical composition and conformation as the anchor-LLD headgroup. Not inhibited by other disaccharides such as lactose, sucrose and trehalose at a similar concentration.</text>
</comment>
<comment type="pathway">
    <text evidence="2">Cell wall biogenesis; lipoteichoic acid biosynthesis.</text>
</comment>
<comment type="subunit">
    <text evidence="3">Interacts with YpfP/UgtP, LtaS, and with numerous cell division and peptidoglycan synthesis proteins.</text>
</comment>
<comment type="subcellular location">
    <subcellularLocation>
        <location evidence="3 4 5">Cell membrane</location>
        <topology evidence="5">Multi-pass membrane protein</topology>
    </subcellularLocation>
    <text evidence="3">Distributed all around the membrane.</text>
</comment>
<comment type="domain">
    <text evidence="5">The N-terminal hydrophilic pocket is crucial for flipping activity. The central cavity of LtaA shows a unique amphiphilic architecture.</text>
</comment>
<comment type="disruption phenotype">
    <text evidence="2 5">Deletion mutant does not show a growth defect at high pH, but it shows very strong growth retardation at low pH (PubMed:32367070). At low pH, mutant displays aberrant cell morphologies, including enlarged cells, defects in the formation and localization of the division septum and abnormal cell-wall shape (PubMed:32367070). Inactivation of the gene causes structural changes in staphylococcal LTA but does not affect glycolipid synthesis (PubMed:17209021). Mutants lacking this gene display a virulence defect in a murine abscess model (PubMed:17209021).</text>
</comment>
<comment type="similarity">
    <text evidence="8">Belongs to the major facilitator superfamily. LtaA family.</text>
</comment>
<comment type="sequence caution" evidence="8">
    <conflict type="erroneous initiation">
        <sequence resource="EMBL-CDS" id="ABD30077"/>
    </conflict>
</comment>
<name>LTAA_STAA8</name>
<reference key="1">
    <citation type="book" date="2006" name="Gram positive pathogens, 2nd edition">
        <title>The Staphylococcus aureus NCTC 8325 genome.</title>
        <editorList>
            <person name="Fischetti V."/>
            <person name="Novick R."/>
            <person name="Ferretti J."/>
            <person name="Portnoy D."/>
            <person name="Rood J."/>
        </editorList>
        <authorList>
            <person name="Gillaspy A.F."/>
            <person name="Worrell V."/>
            <person name="Orvis J."/>
            <person name="Roe B.A."/>
            <person name="Dyer D.W."/>
            <person name="Iandolo J.J."/>
        </authorList>
    </citation>
    <scope>NUCLEOTIDE SEQUENCE [LARGE SCALE GENOMIC DNA]</scope>
    <source>
        <strain>NCTC 8325 / PS 47</strain>
    </source>
</reference>
<reference key="2">
    <citation type="journal article" date="2007" name="J. Bacteriol.">
        <title>Genes required for glycolipid synthesis and lipoteichoic acid anchoring in Staphylococcus aureus.</title>
        <authorList>
            <person name="Gruendling A."/>
            <person name="Schneewind O."/>
        </authorList>
    </citation>
    <scope>FUNCTION AS A PERMEASE</scope>
    <scope>PATHWAY</scope>
    <scope>DISRUPTION PHENOTYPE</scope>
</reference>
<reference key="3">
    <citation type="journal article" date="2014" name="Mol. Microbiol.">
        <title>Differential localization of LTA synthesis proteins and their interaction with the cell division machinery in Staphylococcus aureus.</title>
        <authorList>
            <person name="Reichmann N.T."/>
            <person name="Picarra Cassona C."/>
            <person name="Monteiro J.M."/>
            <person name="Bottomley A.L."/>
            <person name="Corrigan R.M."/>
            <person name="Foster S.J."/>
            <person name="Pinho M.G."/>
            <person name="Gruendling A."/>
        </authorList>
    </citation>
    <scope>SUBCELLULAR LOCATION</scope>
    <scope>INTERACTION WITH UGTP AND LTAS</scope>
</reference>
<reference key="4">
    <citation type="journal article" date="2020" name="Methods Mol. Biol.">
        <title>Stabilization and crystallization of a membrane protein involved in lipid transport.</title>
        <authorList>
            <person name="Zhang B."/>
            <person name="Perez C."/>
        </authorList>
    </citation>
    <scope>PURIFICATION</scope>
    <scope>CRYSTALLIZATION</scope>
    <scope>SUBCELLULAR LOCATION</scope>
</reference>
<reference evidence="10" key="5">
    <citation type="journal article" date="2020" name="Nat. Struct. Mol. Biol.">
        <title>Structure of a proton-dependent lipid transporter involved in lipoteichoic acids biosynthesis.</title>
        <authorList>
            <person name="Zhang B."/>
            <person name="Liu X."/>
            <person name="Lambert E."/>
            <person name="Mas G."/>
            <person name="Hiller S."/>
            <person name="Veening J.W."/>
            <person name="Perez C."/>
        </authorList>
    </citation>
    <scope>X-RAY CRYSTALLOGRAPHY (3.30 ANGSTROMS) OF 10-387</scope>
    <scope>FUNCTION</scope>
    <scope>ACTIVITY REGULATION</scope>
    <scope>SUBCELLULAR LOCATION</scope>
    <scope>TOPOLOGY</scope>
    <scope>DOMAIN</scope>
    <scope>DISRUPTION PHENOTYPE</scope>
    <scope>MUTAGENESIS OF GLU-26; ARG-29; ASP-62; TRP-121; TRP-144; TYR-314 AND GLN-345</scope>
</reference>
<accession>Q2FZP8</accession>
<protein>
    <recommendedName>
        <fullName evidence="7">Proton-coupled antiporter flippase LtaA</fullName>
    </recommendedName>
    <alternativeName>
        <fullName>Lipoteichoic acid protein A</fullName>
    </alternativeName>
</protein>
<feature type="chain" id="PRO_0000287159" description="Proton-coupled antiporter flippase LtaA">
    <location>
        <begin position="1"/>
        <end position="396"/>
    </location>
</feature>
<feature type="topological domain" description="Cytoplasmic" evidence="9">
    <location>
        <begin position="1"/>
        <end position="14"/>
    </location>
</feature>
<feature type="transmembrane region" description="Helical" evidence="1">
    <location>
        <begin position="15"/>
        <end position="34"/>
    </location>
</feature>
<feature type="topological domain" description="Extracellular" evidence="9">
    <location>
        <begin position="35"/>
        <end position="45"/>
    </location>
</feature>
<feature type="transmembrane region" description="Helical" evidence="1">
    <location>
        <begin position="46"/>
        <end position="73"/>
    </location>
</feature>
<feature type="topological domain" description="Cytoplasmic" evidence="9">
    <location>
        <begin position="74"/>
        <end position="79"/>
    </location>
</feature>
<feature type="transmembrane region" description="Helical" evidence="1">
    <location>
        <begin position="80"/>
        <end position="99"/>
    </location>
</feature>
<feature type="topological domain" description="Extracellular" evidence="9">
    <location>
        <begin position="100"/>
        <end position="104"/>
    </location>
</feature>
<feature type="transmembrane region" description="Helical" evidence="1">
    <location>
        <begin position="105"/>
        <end position="126"/>
    </location>
</feature>
<feature type="topological domain" description="Cytoplasmic" evidence="9">
    <location>
        <begin position="127"/>
        <end position="137"/>
    </location>
</feature>
<feature type="transmembrane region" description="Helical" evidence="1">
    <location>
        <begin position="138"/>
        <end position="159"/>
    </location>
</feature>
<feature type="topological domain" description="Extracellular" evidence="9">
    <location>
        <begin position="160"/>
        <end position="164"/>
    </location>
</feature>
<feature type="transmembrane region" description="Helical" evidence="1">
    <location>
        <begin position="165"/>
        <end position="184"/>
    </location>
</feature>
<feature type="topological domain" description="Cytoplasmic" evidence="9">
    <location>
        <begin position="185"/>
        <end position="210"/>
    </location>
</feature>
<feature type="transmembrane region" description="Helical" evidence="1">
    <location>
        <begin position="211"/>
        <end position="231"/>
    </location>
</feature>
<feature type="topological domain" description="Extracellular" evidence="9">
    <location>
        <begin position="232"/>
        <end position="242"/>
    </location>
</feature>
<feature type="transmembrane region" description="Helical" evidence="1">
    <location>
        <begin position="243"/>
        <end position="263"/>
    </location>
</feature>
<feature type="topological domain" description="Cytoplasmic" evidence="9">
    <location>
        <begin position="264"/>
        <end position="274"/>
    </location>
</feature>
<feature type="transmembrane region" description="Helical" evidence="1">
    <location>
        <begin position="275"/>
        <end position="297"/>
    </location>
</feature>
<feature type="topological domain" description="Extracellular" evidence="9">
    <location>
        <begin position="298"/>
        <end position="302"/>
    </location>
</feature>
<feature type="transmembrane region" description="Helical" evidence="1">
    <location>
        <begin position="303"/>
        <end position="326"/>
    </location>
</feature>
<feature type="topological domain" description="Cytoplasmic" evidence="9">
    <location>
        <begin position="327"/>
        <end position="337"/>
    </location>
</feature>
<feature type="transmembrane region" description="Helical" evidence="1">
    <location>
        <begin position="338"/>
        <end position="358"/>
    </location>
</feature>
<feature type="topological domain" description="Extracellular" evidence="9">
    <location>
        <begin position="359"/>
        <end position="369"/>
    </location>
</feature>
<feature type="transmembrane region" description="Helical" evidence="1">
    <location>
        <begin position="370"/>
        <end position="390"/>
    </location>
</feature>
<feature type="topological domain" description="Cytoplasmic" evidence="9">
    <location>
        <begin position="391"/>
        <end position="396"/>
    </location>
</feature>
<feature type="mutagenesis site" description="Flippase activity is about half that of wild-type; when associated with A-62. Mutant is insensitive to transmembrane proton gradients, maintaining basal activity. Shows a strong growth defect at low pH. Cannot rescue the growth defect of the deletion mutant in the presence of 5% CO(2)." evidence="5">
    <original>E</original>
    <variation>A</variation>
    <location>
        <position position="26"/>
    </location>
</feature>
<feature type="mutagenesis site" description="Lack of flippase activity; when associated with A-62. Cannot rescue the growth defect of the deletion mutant in the presence of 5% CO(2). Can rescue the growth defect under overexpression conditions." evidence="5">
    <original>R</original>
    <variation>A</variation>
    <location>
        <position position="29"/>
    </location>
</feature>
<feature type="mutagenesis site" description="Lack of flippase activity; when associated with A-29. Flippase activity is about half that of wild-type; when associated with A-26 or A-144. Cannot rescue the growth defect of the deletion mutant in the presence of 5% CO(2). Can rescue the growth defect under overexpression conditions." evidence="5">
    <original>D</original>
    <variation>A</variation>
    <location>
        <position position="62"/>
    </location>
</feature>
<feature type="mutagenesis site" description="Cannot rescue the growth defect of the deletion mutant in the presence of 5% CO(2). Can rescue the growth defect under overexpression conditions." evidence="5">
    <original>W</original>
    <variation>A</variation>
    <location>
        <position position="121"/>
    </location>
</feature>
<feature type="mutagenesis site" description="Flippase activity is about half that of wild-type; when associated with A-62. Cannot rescue the growth defect of the deletion mutant in the presence of 5% CO(2). Can rescue the growth defect under overexpression conditions." evidence="5">
    <original>W</original>
    <variation>A</variation>
    <location>
        <position position="144"/>
    </location>
</feature>
<feature type="mutagenesis site" description="Rescues the growth defect of the deletion mutant in the presence of 5% CO(2)." evidence="5">
    <original>Y</original>
    <variation>A</variation>
    <location>
        <position position="314"/>
    </location>
</feature>
<feature type="mutagenesis site" description="Rescues the growth defect of the deletion mutant in the presence of 5% CO(2)." evidence="5">
    <original>Q</original>
    <variation>A</variation>
    <location>
        <position position="345"/>
    </location>
</feature>
<feature type="helix" evidence="11">
    <location>
        <begin position="11"/>
        <end position="27"/>
    </location>
</feature>
<feature type="turn" evidence="11">
    <location>
        <begin position="28"/>
        <end position="35"/>
    </location>
</feature>
<feature type="helix" evidence="11">
    <location>
        <begin position="36"/>
        <end position="43"/>
    </location>
</feature>
<feature type="strand" evidence="11">
    <location>
        <begin position="44"/>
        <end position="46"/>
    </location>
</feature>
<feature type="helix" evidence="11">
    <location>
        <begin position="50"/>
        <end position="74"/>
    </location>
</feature>
<feature type="helix" evidence="11">
    <location>
        <begin position="79"/>
        <end position="98"/>
    </location>
</feature>
<feature type="helix" evidence="11">
    <location>
        <begin position="103"/>
        <end position="126"/>
    </location>
</feature>
<feature type="helix" evidence="11">
    <location>
        <begin position="136"/>
        <end position="159"/>
    </location>
</feature>
<feature type="helix" evidence="11">
    <location>
        <begin position="164"/>
        <end position="167"/>
    </location>
</feature>
<feature type="helix" evidence="11">
    <location>
        <begin position="168"/>
        <end position="182"/>
    </location>
</feature>
<feature type="strand" evidence="11">
    <location>
        <begin position="194"/>
        <end position="197"/>
    </location>
</feature>
<feature type="helix" evidence="11">
    <location>
        <begin position="200"/>
        <end position="209"/>
    </location>
</feature>
<feature type="helix" evidence="11">
    <location>
        <begin position="214"/>
        <end position="224"/>
    </location>
</feature>
<feature type="strand" evidence="11">
    <location>
        <begin position="225"/>
        <end position="227"/>
    </location>
</feature>
<feature type="turn" evidence="11">
    <location>
        <begin position="228"/>
        <end position="230"/>
    </location>
</feature>
<feature type="helix" evidence="11">
    <location>
        <begin position="231"/>
        <end position="234"/>
    </location>
</feature>
<feature type="helix" evidence="11">
    <location>
        <begin position="235"/>
        <end position="237"/>
    </location>
</feature>
<feature type="turn" evidence="11">
    <location>
        <begin position="243"/>
        <end position="245"/>
    </location>
</feature>
<feature type="helix" evidence="11">
    <location>
        <begin position="247"/>
        <end position="266"/>
    </location>
</feature>
<feature type="strand" evidence="11">
    <location>
        <begin position="267"/>
        <end position="269"/>
    </location>
</feature>
<feature type="helix" evidence="11">
    <location>
        <begin position="277"/>
        <end position="294"/>
    </location>
</feature>
<feature type="strand" evidence="11">
    <location>
        <begin position="295"/>
        <end position="297"/>
    </location>
</feature>
<feature type="helix" evidence="11">
    <location>
        <begin position="300"/>
        <end position="328"/>
    </location>
</feature>
<feature type="helix" evidence="11">
    <location>
        <begin position="334"/>
        <end position="359"/>
    </location>
</feature>
<feature type="turn" evidence="11">
    <location>
        <begin position="360"/>
        <end position="362"/>
    </location>
</feature>
<feature type="helix" evidence="11">
    <location>
        <begin position="366"/>
        <end position="385"/>
    </location>
</feature>
<evidence type="ECO:0000255" key="1"/>
<evidence type="ECO:0000269" key="2">
    <source>
    </source>
</evidence>
<evidence type="ECO:0000269" key="3">
    <source>
    </source>
</evidence>
<evidence type="ECO:0000269" key="4">
    <source>
    </source>
</evidence>
<evidence type="ECO:0000269" key="5">
    <source>
    </source>
</evidence>
<evidence type="ECO:0000303" key="6">
    <source>
    </source>
</evidence>
<evidence type="ECO:0000303" key="7">
    <source>
    </source>
</evidence>
<evidence type="ECO:0000305" key="8"/>
<evidence type="ECO:0000305" key="9">
    <source>
    </source>
</evidence>
<evidence type="ECO:0007744" key="10">
    <source>
        <dbReference type="PDB" id="6S7V"/>
    </source>
</evidence>
<evidence type="ECO:0007829" key="11">
    <source>
        <dbReference type="PDB" id="6S7V"/>
    </source>
</evidence>
<organism>
    <name type="scientific">Staphylococcus aureus (strain NCTC 8325 / PS 47)</name>
    <dbReference type="NCBI Taxonomy" id="93061"/>
    <lineage>
        <taxon>Bacteria</taxon>
        <taxon>Bacillati</taxon>
        <taxon>Bacillota</taxon>
        <taxon>Bacilli</taxon>
        <taxon>Bacillales</taxon>
        <taxon>Staphylococcaceae</taxon>
        <taxon>Staphylococcus</taxon>
    </lineage>
</organism>
<gene>
    <name evidence="6" type="primary">ltaA</name>
    <name type="ordered locus">SAOUHSC_00952</name>
</gene>
<dbReference type="EMBL" id="CP000253">
    <property type="protein sequence ID" value="ABD30077.1"/>
    <property type="status" value="ALT_INIT"/>
    <property type="molecule type" value="Genomic_DNA"/>
</dbReference>
<dbReference type="RefSeq" id="WP_001154222.1">
    <property type="nucleotide sequence ID" value="NZ_LS483365.1"/>
</dbReference>
<dbReference type="RefSeq" id="WP_001795545.1">
    <property type="nucleotide sequence ID" value="NC_007795.1"/>
</dbReference>
<dbReference type="RefSeq" id="YP_499505.1">
    <property type="nucleotide sequence ID" value="NC_007795.1"/>
</dbReference>
<dbReference type="PDB" id="6S7V">
    <property type="method" value="X-ray"/>
    <property type="resolution" value="3.30 A"/>
    <property type="chains" value="A=10-387"/>
</dbReference>
<dbReference type="PDBsum" id="6S7V"/>
<dbReference type="SMR" id="Q2FZP8"/>
<dbReference type="STRING" id="93061.SAOUHSC_00952"/>
<dbReference type="TCDB" id="2.A.1.2.44">
    <property type="family name" value="the major facilitator superfamily (mfs)"/>
</dbReference>
<dbReference type="PaxDb" id="1280-SAXN108_1012"/>
<dbReference type="GeneID" id="3920663"/>
<dbReference type="KEGG" id="sao:SAOUHSC_00952"/>
<dbReference type="PATRIC" id="fig|93061.5.peg.873"/>
<dbReference type="eggNOG" id="COG2814">
    <property type="taxonomic scope" value="Bacteria"/>
</dbReference>
<dbReference type="HOGENOM" id="CLU_054518_0_0_9"/>
<dbReference type="OrthoDB" id="9815817at2"/>
<dbReference type="BioCyc" id="MetaCyc:MONOMER-20003"/>
<dbReference type="UniPathway" id="UPA00556"/>
<dbReference type="Proteomes" id="UP000008816">
    <property type="component" value="Chromosome"/>
</dbReference>
<dbReference type="GO" id="GO:0005886">
    <property type="term" value="C:plasma membrane"/>
    <property type="evidence" value="ECO:0007669"/>
    <property type="project" value="UniProtKB-SubCell"/>
</dbReference>
<dbReference type="GO" id="GO:0015297">
    <property type="term" value="F:antiporter activity"/>
    <property type="evidence" value="ECO:0007669"/>
    <property type="project" value="UniProtKB-KW"/>
</dbReference>
<dbReference type="GO" id="GO:0006869">
    <property type="term" value="P:lipid transport"/>
    <property type="evidence" value="ECO:0007669"/>
    <property type="project" value="UniProtKB-KW"/>
</dbReference>
<dbReference type="GO" id="GO:0070395">
    <property type="term" value="P:lipoteichoic acid biosynthetic process"/>
    <property type="evidence" value="ECO:0007669"/>
    <property type="project" value="UniProtKB-UniPathway"/>
</dbReference>
<dbReference type="CDD" id="cd17325">
    <property type="entry name" value="MFS_MdtG_SLC18_like"/>
    <property type="match status" value="1"/>
</dbReference>
<dbReference type="Gene3D" id="1.20.1250.20">
    <property type="entry name" value="MFS general substrate transporter like domains"/>
    <property type="match status" value="2"/>
</dbReference>
<dbReference type="InterPro" id="IPR050495">
    <property type="entry name" value="ATG22/LtaA_families"/>
</dbReference>
<dbReference type="InterPro" id="IPR011701">
    <property type="entry name" value="MFS"/>
</dbReference>
<dbReference type="InterPro" id="IPR020846">
    <property type="entry name" value="MFS_dom"/>
</dbReference>
<dbReference type="InterPro" id="IPR036259">
    <property type="entry name" value="MFS_trans_sf"/>
</dbReference>
<dbReference type="NCBIfam" id="NF047396">
    <property type="entry name" value="MFS_flip_LtaA"/>
    <property type="match status" value="1"/>
</dbReference>
<dbReference type="PANTHER" id="PTHR23519">
    <property type="entry name" value="AUTOPHAGY-RELATED PROTEIN 22"/>
    <property type="match status" value="1"/>
</dbReference>
<dbReference type="PANTHER" id="PTHR23519:SF1">
    <property type="entry name" value="AUTOPHAGY-RELATED PROTEIN 22"/>
    <property type="match status" value="1"/>
</dbReference>
<dbReference type="Pfam" id="PF07690">
    <property type="entry name" value="MFS_1"/>
    <property type="match status" value="1"/>
</dbReference>
<dbReference type="SUPFAM" id="SSF103473">
    <property type="entry name" value="MFS general substrate transporter"/>
    <property type="match status" value="1"/>
</dbReference>
<dbReference type="PROSITE" id="PS50850">
    <property type="entry name" value="MFS"/>
    <property type="match status" value="1"/>
</dbReference>
<sequence>MQDSSLNNYANHKNFILMLIILFLMEFARGMYILSYINFLPTVTSIAVAITSLAFSIHFIADASTNFVIGFLLKKFGTKIVLTTGFILAFTSLFLVIWFPASPFVIIFSAMMLGIAVSPIWVIMLSSVEEDKRGKQMGYVYFSWLLGLLVGMVFMNLLIKVHPTRFAFMMSLVVLIAWILYYFVDVKLTNYNTRPVKAQLRQIVDVTKRHLLLFPGILLQGAAIAALVPILPTYATKVINVSTIEYTVAIIIGGIGCAVSMLFLSKLIDNRSRNFMYGVILSGFILYMILIFTLSMIVNIHILWIIALAIGLMYGILLPAWNTFMARFIKSDEQEETWGVFNSIQGFGSMIGPLFGGLITQFTNNLNNTFYFSALIFLVLAVFYGSYFIVNREKAK</sequence>
<proteinExistence type="evidence at protein level"/>
<keyword id="KW-0002">3D-structure</keyword>
<keyword id="KW-0050">Antiport</keyword>
<keyword id="KW-1003">Cell membrane</keyword>
<keyword id="KW-0445">Lipid transport</keyword>
<keyword id="KW-0472">Membrane</keyword>
<keyword id="KW-1185">Reference proteome</keyword>
<keyword id="KW-0812">Transmembrane</keyword>
<keyword id="KW-1133">Transmembrane helix</keyword>
<keyword id="KW-0813">Transport</keyword>
<keyword id="KW-0843">Virulence</keyword>